<evidence type="ECO:0000250" key="1"/>
<evidence type="ECO:0000250" key="2">
    <source>
        <dbReference type="UniProtKB" id="Q16514"/>
    </source>
</evidence>
<evidence type="ECO:0000256" key="3">
    <source>
        <dbReference type="SAM" id="MobiDB-lite"/>
    </source>
</evidence>
<evidence type="ECO:0000305" key="4"/>
<evidence type="ECO:0007744" key="5">
    <source>
    </source>
</evidence>
<evidence type="ECO:0007744" key="6">
    <source>
    </source>
</evidence>
<evidence type="ECO:0007744" key="7">
    <source>
    </source>
</evidence>
<accession>Q8VE65</accession>
<accession>Q3V0S7</accession>
<accession>Q9CZ11</accession>
<accession>Q9D8Q0</accession>
<proteinExistence type="evidence at protein level"/>
<comment type="function">
    <text evidence="2">The TFIID basal transcription factor complex plays a major role in the initiation of RNA polymerase II (Pol II)-dependent transcription. TFIID recognizes and binds promoters with or without a TATA box via its subunit TBP, a TATA-box-binding protein, and promotes assembly of the pre-initiation complex (PIC). The TFIID complex consists of TBP and TBP-associated factors (TAFs), including TAF1, TAF2, TAF3, TAF4, TAF5, TAF6, TAF7, TAF8, TAF9, TAF10, TAF11, TAF12 and TAF13. Component of the TATA-binding protein-free TAF complex (TFTC), the PCAF histone acetylase complex and the STAGA transcription coactivator-HAT complex.</text>
</comment>
<comment type="subunit">
    <text evidence="2">Component of the TFIID basal transcription factor complex, composed of TATA-box-binding protein TBP, and a number of TBP-associated factors (TAFs), including TAF1, TAF2, TAF3, TAF4, TAF5, TAF6, TAF7, TAF8, TAF9, TAF10, TAF11, TAF12 and TAF13. Component of the TATA-binding protein-free TAF complex (TFTC), the PCAF histone acetylase complex and the STAGA transcription coactivator-HAT complex. Component of the PCAF complex, at least composed of TADA2L/ADA2, TADA3L/ADA3, TAF5L/PAF65-beta, SUPT3H, TAF6L, TAF9, TAF10, TAF12 and TRRAP. Component of the STAGA transcription coactivator-HAT complex, at least composed of SUPT3H, GCN5L2, TAF5L, TAF6L, STAF65-gamma/SUPT7L, TADA3L, TAD1L, TAF10, TAF12, TRRAP and TAF9. Interacts with ATF7 (via the transactivation domain); the interaction is prevented by sumoylation of ATF7.</text>
</comment>
<comment type="subcellular location">
    <subcellularLocation>
        <location evidence="1">Nucleus</location>
    </subcellularLocation>
</comment>
<comment type="similarity">
    <text evidence="4">Belongs to the TAF12 family.</text>
</comment>
<dbReference type="EMBL" id="AK007811">
    <property type="protein sequence ID" value="BAB25276.1"/>
    <property type="molecule type" value="mRNA"/>
</dbReference>
<dbReference type="EMBL" id="AK013133">
    <property type="protein sequence ID" value="BAB28669.1"/>
    <property type="molecule type" value="mRNA"/>
</dbReference>
<dbReference type="EMBL" id="AK132927">
    <property type="protein sequence ID" value="BAE21426.1"/>
    <property type="molecule type" value="mRNA"/>
</dbReference>
<dbReference type="EMBL" id="BC019668">
    <property type="protein sequence ID" value="AAH19668.1"/>
    <property type="molecule type" value="mRNA"/>
</dbReference>
<dbReference type="CCDS" id="CCDS18721.1"/>
<dbReference type="RefSeq" id="NP_079855.2">
    <property type="nucleotide sequence ID" value="NM_025579.3"/>
</dbReference>
<dbReference type="RefSeq" id="XP_006539170.2">
    <property type="nucleotide sequence ID" value="XM_006539107.3"/>
</dbReference>
<dbReference type="RefSeq" id="XP_006539172.1">
    <property type="nucleotide sequence ID" value="XM_006539109.2"/>
</dbReference>
<dbReference type="RefSeq" id="XP_006539173.1">
    <property type="nucleotide sequence ID" value="XM_006539110.3"/>
</dbReference>
<dbReference type="RefSeq" id="XP_017175839.1">
    <property type="nucleotide sequence ID" value="XM_017320350.1"/>
</dbReference>
<dbReference type="SMR" id="Q8VE65"/>
<dbReference type="ComplexPortal" id="CPX-1024">
    <property type="entry name" value="PCAF histone acetylase complex"/>
</dbReference>
<dbReference type="ComplexPortal" id="CPX-6803">
    <property type="entry name" value="SAGA complex, KAT2B variant"/>
</dbReference>
<dbReference type="ComplexPortal" id="CPX-916">
    <property type="entry name" value="TFTC histone acetylation complex"/>
</dbReference>
<dbReference type="ComplexPortal" id="CPX-920">
    <property type="entry name" value="SAGA complex, KAT2A variant"/>
</dbReference>
<dbReference type="ComplexPortal" id="CPX-932">
    <property type="entry name" value="General transcription factor complex TFIID"/>
</dbReference>
<dbReference type="ComplexPortal" id="CPX-959">
    <property type="entry name" value="General transcription factor complex TFIID, Taf4b variant"/>
</dbReference>
<dbReference type="CORUM" id="Q8VE65"/>
<dbReference type="DIP" id="DIP-29178N"/>
<dbReference type="FunCoup" id="Q8VE65">
    <property type="interactions" value="2226"/>
</dbReference>
<dbReference type="IntAct" id="Q8VE65">
    <property type="interactions" value="3"/>
</dbReference>
<dbReference type="MINT" id="Q8VE65"/>
<dbReference type="STRING" id="10090.ENSMUSP00000030731"/>
<dbReference type="GlyGen" id="Q8VE65">
    <property type="glycosylation" value="1 site"/>
</dbReference>
<dbReference type="iPTMnet" id="Q8VE65"/>
<dbReference type="PhosphoSitePlus" id="Q8VE65"/>
<dbReference type="jPOST" id="Q8VE65"/>
<dbReference type="PaxDb" id="10090-ENSMUSP00000030731"/>
<dbReference type="PeptideAtlas" id="Q8VE65"/>
<dbReference type="ProteomicsDB" id="254646"/>
<dbReference type="Pumba" id="Q8VE65"/>
<dbReference type="Antibodypedia" id="1777">
    <property type="antibodies" value="207 antibodies from 27 providers"/>
</dbReference>
<dbReference type="DNASU" id="66464"/>
<dbReference type="Ensembl" id="ENSMUST00000030731.11">
    <property type="protein sequence ID" value="ENSMUSP00000030731.5"/>
    <property type="gene ID" value="ENSMUSG00000028899.12"/>
</dbReference>
<dbReference type="GeneID" id="66464"/>
<dbReference type="KEGG" id="mmu:66464"/>
<dbReference type="UCSC" id="uc008vax.3">
    <property type="organism name" value="mouse"/>
</dbReference>
<dbReference type="AGR" id="MGI:1913714"/>
<dbReference type="CTD" id="6883"/>
<dbReference type="MGI" id="MGI:1913714">
    <property type="gene designation" value="Taf12"/>
</dbReference>
<dbReference type="VEuPathDB" id="HostDB:ENSMUSG00000028899"/>
<dbReference type="eggNOG" id="KOG1142">
    <property type="taxonomic scope" value="Eukaryota"/>
</dbReference>
<dbReference type="GeneTree" id="ENSGT00390000002144"/>
<dbReference type="HOGENOM" id="CLU_093619_3_1_1"/>
<dbReference type="InParanoid" id="Q8VE65"/>
<dbReference type="OMA" id="IAPVCKT"/>
<dbReference type="OrthoDB" id="2193432at2759"/>
<dbReference type="PhylomeDB" id="Q8VE65"/>
<dbReference type="TreeFam" id="TF323652"/>
<dbReference type="Reactome" id="R-MMU-674695">
    <property type="pathway name" value="RNA Polymerase II Pre-transcription Events"/>
</dbReference>
<dbReference type="Reactome" id="R-MMU-6804756">
    <property type="pathway name" value="Regulation of TP53 Activity through Phosphorylation"/>
</dbReference>
<dbReference type="Reactome" id="R-MMU-73776">
    <property type="pathway name" value="RNA Polymerase II Promoter Escape"/>
</dbReference>
<dbReference type="Reactome" id="R-MMU-73779">
    <property type="pathway name" value="RNA Polymerase II Transcription Pre-Initiation And Promoter Opening"/>
</dbReference>
<dbReference type="Reactome" id="R-MMU-75953">
    <property type="pathway name" value="RNA Polymerase II Transcription Initiation"/>
</dbReference>
<dbReference type="Reactome" id="R-MMU-76042">
    <property type="pathway name" value="RNA Polymerase II Transcription Initiation And Promoter Clearance"/>
</dbReference>
<dbReference type="BioGRID-ORCS" id="66464">
    <property type="hits" value="21 hits in 87 CRISPR screens"/>
</dbReference>
<dbReference type="ChiTaRS" id="Taf12">
    <property type="organism name" value="mouse"/>
</dbReference>
<dbReference type="PRO" id="PR:Q8VE65"/>
<dbReference type="Proteomes" id="UP000000589">
    <property type="component" value="Chromosome 4"/>
</dbReference>
<dbReference type="RNAct" id="Q8VE65">
    <property type="molecule type" value="protein"/>
</dbReference>
<dbReference type="Bgee" id="ENSMUSG00000028899">
    <property type="expression patterns" value="Expressed in animal zygote and 241 other cell types or tissues"/>
</dbReference>
<dbReference type="ExpressionAtlas" id="Q8VE65">
    <property type="expression patterns" value="baseline and differential"/>
</dbReference>
<dbReference type="GO" id="GO:0005634">
    <property type="term" value="C:nucleus"/>
    <property type="evidence" value="ECO:0000314"/>
    <property type="project" value="MGI"/>
</dbReference>
<dbReference type="GO" id="GO:0000124">
    <property type="term" value="C:SAGA complex"/>
    <property type="evidence" value="ECO:0000314"/>
    <property type="project" value="MGI"/>
</dbReference>
<dbReference type="GO" id="GO:0005669">
    <property type="term" value="C:transcription factor TFIID complex"/>
    <property type="evidence" value="ECO:0000266"/>
    <property type="project" value="MGI"/>
</dbReference>
<dbReference type="GO" id="GO:0033276">
    <property type="term" value="C:transcription factor TFTC complex"/>
    <property type="evidence" value="ECO:0000303"/>
    <property type="project" value="ComplexPortal"/>
</dbReference>
<dbReference type="GO" id="GO:0003677">
    <property type="term" value="F:DNA binding"/>
    <property type="evidence" value="ECO:0000314"/>
    <property type="project" value="MGI"/>
</dbReference>
<dbReference type="GO" id="GO:0140297">
    <property type="term" value="F:DNA-binding transcription factor binding"/>
    <property type="evidence" value="ECO:0007669"/>
    <property type="project" value="Ensembl"/>
</dbReference>
<dbReference type="GO" id="GO:0046982">
    <property type="term" value="F:protein heterodimerization activity"/>
    <property type="evidence" value="ECO:0007669"/>
    <property type="project" value="InterPro"/>
</dbReference>
<dbReference type="GO" id="GO:0016251">
    <property type="term" value="F:RNA polymerase II general transcription initiation factor activity"/>
    <property type="evidence" value="ECO:0007669"/>
    <property type="project" value="Ensembl"/>
</dbReference>
<dbReference type="GO" id="GO:0003713">
    <property type="term" value="F:transcription coactivator activity"/>
    <property type="evidence" value="ECO:0007669"/>
    <property type="project" value="Ensembl"/>
</dbReference>
<dbReference type="GO" id="GO:0042789">
    <property type="term" value="P:mRNA transcription by RNA polymerase II"/>
    <property type="evidence" value="ECO:0000266"/>
    <property type="project" value="ComplexPortal"/>
</dbReference>
<dbReference type="GO" id="GO:0045893">
    <property type="term" value="P:positive regulation of DNA-templated transcription"/>
    <property type="evidence" value="ECO:0000303"/>
    <property type="project" value="ComplexPortal"/>
</dbReference>
<dbReference type="GO" id="GO:0060261">
    <property type="term" value="P:positive regulation of transcription initiation by RNA polymerase II"/>
    <property type="evidence" value="ECO:0000266"/>
    <property type="project" value="ComplexPortal"/>
</dbReference>
<dbReference type="GO" id="GO:0006282">
    <property type="term" value="P:regulation of DNA repair"/>
    <property type="evidence" value="ECO:0000303"/>
    <property type="project" value="ComplexPortal"/>
</dbReference>
<dbReference type="GO" id="GO:0006355">
    <property type="term" value="P:regulation of DNA-templated transcription"/>
    <property type="evidence" value="ECO:0000303"/>
    <property type="project" value="ComplexPortal"/>
</dbReference>
<dbReference type="GO" id="GO:0043484">
    <property type="term" value="P:regulation of RNA splicing"/>
    <property type="evidence" value="ECO:0000303"/>
    <property type="project" value="ComplexPortal"/>
</dbReference>
<dbReference type="GO" id="GO:0006357">
    <property type="term" value="P:regulation of transcription by RNA polymerase II"/>
    <property type="evidence" value="ECO:0000266"/>
    <property type="project" value="ComplexPortal"/>
</dbReference>
<dbReference type="GO" id="GO:0051123">
    <property type="term" value="P:RNA polymerase II preinitiation complex assembly"/>
    <property type="evidence" value="ECO:0000266"/>
    <property type="project" value="ComplexPortal"/>
</dbReference>
<dbReference type="CDD" id="cd07981">
    <property type="entry name" value="HFD_TAF12"/>
    <property type="match status" value="1"/>
</dbReference>
<dbReference type="FunFam" id="1.10.20.10:FF:000011">
    <property type="entry name" value="Transcription initiation factor TFIID subunit 12"/>
    <property type="match status" value="1"/>
</dbReference>
<dbReference type="Gene3D" id="1.10.20.10">
    <property type="entry name" value="Histone, subunit A"/>
    <property type="match status" value="1"/>
</dbReference>
<dbReference type="InterPro" id="IPR009072">
    <property type="entry name" value="Histone-fold"/>
</dbReference>
<dbReference type="InterPro" id="IPR037794">
    <property type="entry name" value="TAF12"/>
</dbReference>
<dbReference type="InterPro" id="IPR003228">
    <property type="entry name" value="TFIID_TAF12_dom"/>
</dbReference>
<dbReference type="PANTHER" id="PTHR12264">
    <property type="entry name" value="TRANSCRIPTION INITIATION FACTOR TFIID SUBUNIT 12"/>
    <property type="match status" value="1"/>
</dbReference>
<dbReference type="PANTHER" id="PTHR12264:SF21">
    <property type="entry name" value="TRANSCRIPTION INITIATION FACTOR TFIID SUBUNIT 12"/>
    <property type="match status" value="1"/>
</dbReference>
<dbReference type="Pfam" id="PF03847">
    <property type="entry name" value="TFIID_20kDa"/>
    <property type="match status" value="1"/>
</dbReference>
<dbReference type="SUPFAM" id="SSF47113">
    <property type="entry name" value="Histone-fold"/>
    <property type="match status" value="1"/>
</dbReference>
<gene>
    <name type="primary">Taf12</name>
</gene>
<protein>
    <recommendedName>
        <fullName>Transcription initiation factor TFIID subunit 12</fullName>
    </recommendedName>
    <alternativeName>
        <fullName>Transcription initiation factor TFIID 20 kDa subunits</fullName>
        <shortName>TAFII-20</shortName>
        <shortName>TAFII20</shortName>
    </alternativeName>
</protein>
<sequence>MNQFGPSALINLSSFSSVKPEPASTPPQGSMANSTTVGKIAGTPGTGGRLSPENNQVLTKKKLQDLVREVDPNEQLDEDVEEMLLQIADDFIESVVTAACQLARHRKSSTLEVKDVQLHLERQWNMWIPGFGSEEIRPYKKACTTEAHKQRMALIRKTTKK</sequence>
<feature type="chain" id="PRO_0000118908" description="Transcription initiation factor TFIID subunit 12">
    <location>
        <begin position="1"/>
        <end position="161"/>
    </location>
</feature>
<feature type="domain" description="Histone-fold" evidence="4">
    <location>
        <begin position="56"/>
        <end position="128"/>
    </location>
</feature>
<feature type="region of interest" description="Disordered" evidence="3">
    <location>
        <begin position="1"/>
        <end position="56"/>
    </location>
</feature>
<feature type="compositionally biased region" description="Polar residues" evidence="3">
    <location>
        <begin position="1"/>
        <end position="17"/>
    </location>
</feature>
<feature type="compositionally biased region" description="Polar residues" evidence="3">
    <location>
        <begin position="26"/>
        <end position="37"/>
    </location>
</feature>
<feature type="modified residue" description="Phosphothreonine" evidence="2">
    <location>
        <position position="43"/>
    </location>
</feature>
<feature type="modified residue" description="Phosphoserine" evidence="5 6 7">
    <location>
        <position position="51"/>
    </location>
</feature>
<feature type="modified residue" description="Phosphothreonine" evidence="2">
    <location>
        <position position="59"/>
    </location>
</feature>
<feature type="cross-link" description="Glycyl lysine isopeptide (Lys-Gly) (interchain with G-Cter in SUMO2)" evidence="2">
    <location>
        <position position="19"/>
    </location>
</feature>
<feature type="sequence conflict" description="In Ref. 1; BAB28669." evidence="4" ref="1">
    <original>D</original>
    <variation>G</variation>
    <location>
        <position position="77"/>
    </location>
</feature>
<feature type="sequence conflict" description="In Ref. 1; BAB28669." evidence="4" ref="1">
    <original>M</original>
    <variation>I</variation>
    <location>
        <position position="126"/>
    </location>
</feature>
<feature type="sequence conflict" description="In Ref. 1; BAB25276." evidence="4" ref="1">
    <original>K</original>
    <variation>N</variation>
    <location>
        <position position="157"/>
    </location>
</feature>
<keyword id="KW-1017">Isopeptide bond</keyword>
<keyword id="KW-0539">Nucleus</keyword>
<keyword id="KW-0597">Phosphoprotein</keyword>
<keyword id="KW-1185">Reference proteome</keyword>
<keyword id="KW-0804">Transcription</keyword>
<keyword id="KW-0805">Transcription regulation</keyword>
<keyword id="KW-0832">Ubl conjugation</keyword>
<reference key="1">
    <citation type="journal article" date="2005" name="Science">
        <title>The transcriptional landscape of the mammalian genome.</title>
        <authorList>
            <person name="Carninci P."/>
            <person name="Kasukawa T."/>
            <person name="Katayama S."/>
            <person name="Gough J."/>
            <person name="Frith M.C."/>
            <person name="Maeda N."/>
            <person name="Oyama R."/>
            <person name="Ravasi T."/>
            <person name="Lenhard B."/>
            <person name="Wells C."/>
            <person name="Kodzius R."/>
            <person name="Shimokawa K."/>
            <person name="Bajic V.B."/>
            <person name="Brenner S.E."/>
            <person name="Batalov S."/>
            <person name="Forrest A.R."/>
            <person name="Zavolan M."/>
            <person name="Davis M.J."/>
            <person name="Wilming L.G."/>
            <person name="Aidinis V."/>
            <person name="Allen J.E."/>
            <person name="Ambesi-Impiombato A."/>
            <person name="Apweiler R."/>
            <person name="Aturaliya R.N."/>
            <person name="Bailey T.L."/>
            <person name="Bansal M."/>
            <person name="Baxter L."/>
            <person name="Beisel K.W."/>
            <person name="Bersano T."/>
            <person name="Bono H."/>
            <person name="Chalk A.M."/>
            <person name="Chiu K.P."/>
            <person name="Choudhary V."/>
            <person name="Christoffels A."/>
            <person name="Clutterbuck D.R."/>
            <person name="Crowe M.L."/>
            <person name="Dalla E."/>
            <person name="Dalrymple B.P."/>
            <person name="de Bono B."/>
            <person name="Della Gatta G."/>
            <person name="di Bernardo D."/>
            <person name="Down T."/>
            <person name="Engstrom P."/>
            <person name="Fagiolini M."/>
            <person name="Faulkner G."/>
            <person name="Fletcher C.F."/>
            <person name="Fukushima T."/>
            <person name="Furuno M."/>
            <person name="Futaki S."/>
            <person name="Gariboldi M."/>
            <person name="Georgii-Hemming P."/>
            <person name="Gingeras T.R."/>
            <person name="Gojobori T."/>
            <person name="Green R.E."/>
            <person name="Gustincich S."/>
            <person name="Harbers M."/>
            <person name="Hayashi Y."/>
            <person name="Hensch T.K."/>
            <person name="Hirokawa N."/>
            <person name="Hill D."/>
            <person name="Huminiecki L."/>
            <person name="Iacono M."/>
            <person name="Ikeo K."/>
            <person name="Iwama A."/>
            <person name="Ishikawa T."/>
            <person name="Jakt M."/>
            <person name="Kanapin A."/>
            <person name="Katoh M."/>
            <person name="Kawasawa Y."/>
            <person name="Kelso J."/>
            <person name="Kitamura H."/>
            <person name="Kitano H."/>
            <person name="Kollias G."/>
            <person name="Krishnan S.P."/>
            <person name="Kruger A."/>
            <person name="Kummerfeld S.K."/>
            <person name="Kurochkin I.V."/>
            <person name="Lareau L.F."/>
            <person name="Lazarevic D."/>
            <person name="Lipovich L."/>
            <person name="Liu J."/>
            <person name="Liuni S."/>
            <person name="McWilliam S."/>
            <person name="Madan Babu M."/>
            <person name="Madera M."/>
            <person name="Marchionni L."/>
            <person name="Matsuda H."/>
            <person name="Matsuzawa S."/>
            <person name="Miki H."/>
            <person name="Mignone F."/>
            <person name="Miyake S."/>
            <person name="Morris K."/>
            <person name="Mottagui-Tabar S."/>
            <person name="Mulder N."/>
            <person name="Nakano N."/>
            <person name="Nakauchi H."/>
            <person name="Ng P."/>
            <person name="Nilsson R."/>
            <person name="Nishiguchi S."/>
            <person name="Nishikawa S."/>
            <person name="Nori F."/>
            <person name="Ohara O."/>
            <person name="Okazaki Y."/>
            <person name="Orlando V."/>
            <person name="Pang K.C."/>
            <person name="Pavan W.J."/>
            <person name="Pavesi G."/>
            <person name="Pesole G."/>
            <person name="Petrovsky N."/>
            <person name="Piazza S."/>
            <person name="Reed J."/>
            <person name="Reid J.F."/>
            <person name="Ring B.Z."/>
            <person name="Ringwald M."/>
            <person name="Rost B."/>
            <person name="Ruan Y."/>
            <person name="Salzberg S.L."/>
            <person name="Sandelin A."/>
            <person name="Schneider C."/>
            <person name="Schoenbach C."/>
            <person name="Sekiguchi K."/>
            <person name="Semple C.A."/>
            <person name="Seno S."/>
            <person name="Sessa L."/>
            <person name="Sheng Y."/>
            <person name="Shibata Y."/>
            <person name="Shimada H."/>
            <person name="Shimada K."/>
            <person name="Silva D."/>
            <person name="Sinclair B."/>
            <person name="Sperling S."/>
            <person name="Stupka E."/>
            <person name="Sugiura K."/>
            <person name="Sultana R."/>
            <person name="Takenaka Y."/>
            <person name="Taki K."/>
            <person name="Tammoja K."/>
            <person name="Tan S.L."/>
            <person name="Tang S."/>
            <person name="Taylor M.S."/>
            <person name="Tegner J."/>
            <person name="Teichmann S.A."/>
            <person name="Ueda H.R."/>
            <person name="van Nimwegen E."/>
            <person name="Verardo R."/>
            <person name="Wei C.L."/>
            <person name="Yagi K."/>
            <person name="Yamanishi H."/>
            <person name="Zabarovsky E."/>
            <person name="Zhu S."/>
            <person name="Zimmer A."/>
            <person name="Hide W."/>
            <person name="Bult C."/>
            <person name="Grimmond S.M."/>
            <person name="Teasdale R.D."/>
            <person name="Liu E.T."/>
            <person name="Brusic V."/>
            <person name="Quackenbush J."/>
            <person name="Wahlestedt C."/>
            <person name="Mattick J.S."/>
            <person name="Hume D.A."/>
            <person name="Kai C."/>
            <person name="Sasaki D."/>
            <person name="Tomaru Y."/>
            <person name="Fukuda S."/>
            <person name="Kanamori-Katayama M."/>
            <person name="Suzuki M."/>
            <person name="Aoki J."/>
            <person name="Arakawa T."/>
            <person name="Iida J."/>
            <person name="Imamura K."/>
            <person name="Itoh M."/>
            <person name="Kato T."/>
            <person name="Kawaji H."/>
            <person name="Kawagashira N."/>
            <person name="Kawashima T."/>
            <person name="Kojima M."/>
            <person name="Kondo S."/>
            <person name="Konno H."/>
            <person name="Nakano K."/>
            <person name="Ninomiya N."/>
            <person name="Nishio T."/>
            <person name="Okada M."/>
            <person name="Plessy C."/>
            <person name="Shibata K."/>
            <person name="Shiraki T."/>
            <person name="Suzuki S."/>
            <person name="Tagami M."/>
            <person name="Waki K."/>
            <person name="Watahiki A."/>
            <person name="Okamura-Oho Y."/>
            <person name="Suzuki H."/>
            <person name="Kawai J."/>
            <person name="Hayashizaki Y."/>
        </authorList>
    </citation>
    <scope>NUCLEOTIDE SEQUENCE [LARGE SCALE MRNA]</scope>
    <source>
        <strain>C57BL/6J</strain>
        <tissue>Embryo</tissue>
        <tissue>Pancreas</tissue>
        <tissue>Testis</tissue>
    </source>
</reference>
<reference key="2">
    <citation type="journal article" date="2004" name="Genome Res.">
        <title>The status, quality, and expansion of the NIH full-length cDNA project: the Mammalian Gene Collection (MGC).</title>
        <authorList>
            <consortium name="The MGC Project Team"/>
        </authorList>
    </citation>
    <scope>NUCLEOTIDE SEQUENCE [LARGE SCALE MRNA]</scope>
</reference>
<reference key="3">
    <citation type="journal article" date="2007" name="Proc. Natl. Acad. Sci. U.S.A.">
        <title>Large-scale phosphorylation analysis of mouse liver.</title>
        <authorList>
            <person name="Villen J."/>
            <person name="Beausoleil S.A."/>
            <person name="Gerber S.A."/>
            <person name="Gygi S.P."/>
        </authorList>
    </citation>
    <scope>PHOSPHORYLATION [LARGE SCALE ANALYSIS] AT SER-51</scope>
    <scope>IDENTIFICATION BY MASS SPECTROMETRY [LARGE SCALE ANALYSIS]</scope>
    <source>
        <tissue>Liver</tissue>
    </source>
</reference>
<reference key="4">
    <citation type="journal article" date="2009" name="Mol. Cell. Proteomics">
        <title>Large scale localization of protein phosphorylation by use of electron capture dissociation mass spectrometry.</title>
        <authorList>
            <person name="Sweet S.M."/>
            <person name="Bailey C.M."/>
            <person name="Cunningham D.L."/>
            <person name="Heath J.K."/>
            <person name="Cooper H.J."/>
        </authorList>
    </citation>
    <scope>PHOSPHORYLATION [LARGE SCALE ANALYSIS] AT SER-51</scope>
    <scope>IDENTIFICATION BY MASS SPECTROMETRY [LARGE SCALE ANALYSIS]</scope>
    <source>
        <tissue>Embryonic fibroblast</tissue>
    </source>
</reference>
<reference key="5">
    <citation type="journal article" date="2010" name="Cell">
        <title>A tissue-specific atlas of mouse protein phosphorylation and expression.</title>
        <authorList>
            <person name="Huttlin E.L."/>
            <person name="Jedrychowski M.P."/>
            <person name="Elias J.E."/>
            <person name="Goswami T."/>
            <person name="Rad R."/>
            <person name="Beausoleil S.A."/>
            <person name="Villen J."/>
            <person name="Haas W."/>
            <person name="Sowa M.E."/>
            <person name="Gygi S.P."/>
        </authorList>
    </citation>
    <scope>PHOSPHORYLATION [LARGE SCALE ANALYSIS] AT SER-51</scope>
    <scope>IDENTIFICATION BY MASS SPECTROMETRY [LARGE SCALE ANALYSIS]</scope>
    <source>
        <tissue>Brown adipose tissue</tissue>
        <tissue>Kidney</tissue>
        <tissue>Lung</tissue>
        <tissue>Testis</tissue>
    </source>
</reference>
<name>TAF12_MOUSE</name>
<organism>
    <name type="scientific">Mus musculus</name>
    <name type="common">Mouse</name>
    <dbReference type="NCBI Taxonomy" id="10090"/>
    <lineage>
        <taxon>Eukaryota</taxon>
        <taxon>Metazoa</taxon>
        <taxon>Chordata</taxon>
        <taxon>Craniata</taxon>
        <taxon>Vertebrata</taxon>
        <taxon>Euteleostomi</taxon>
        <taxon>Mammalia</taxon>
        <taxon>Eutheria</taxon>
        <taxon>Euarchontoglires</taxon>
        <taxon>Glires</taxon>
        <taxon>Rodentia</taxon>
        <taxon>Myomorpha</taxon>
        <taxon>Muroidea</taxon>
        <taxon>Muridae</taxon>
        <taxon>Murinae</taxon>
        <taxon>Mus</taxon>
        <taxon>Mus</taxon>
    </lineage>
</organism>